<keyword id="KW-0963">Cytoplasm</keyword>
<keyword id="KW-0456">Lyase</keyword>
<keyword id="KW-0479">Metal-binding</keyword>
<keyword id="KW-1185">Reference proteome</keyword>
<keyword id="KW-0684">Rhamnose metabolism</keyword>
<keyword id="KW-0862">Zinc</keyword>
<evidence type="ECO:0000255" key="1">
    <source>
        <dbReference type="HAMAP-Rule" id="MF_00770"/>
    </source>
</evidence>
<reference key="1">
    <citation type="journal article" date="2001" name="Nature">
        <title>Genome sequence of enterohaemorrhagic Escherichia coli O157:H7.</title>
        <authorList>
            <person name="Perna N.T."/>
            <person name="Plunkett G. III"/>
            <person name="Burland V."/>
            <person name="Mau B."/>
            <person name="Glasner J.D."/>
            <person name="Rose D.J."/>
            <person name="Mayhew G.F."/>
            <person name="Evans P.S."/>
            <person name="Gregor J."/>
            <person name="Kirkpatrick H.A."/>
            <person name="Posfai G."/>
            <person name="Hackett J."/>
            <person name="Klink S."/>
            <person name="Boutin A."/>
            <person name="Shao Y."/>
            <person name="Miller L."/>
            <person name="Grotbeck E.J."/>
            <person name="Davis N.W."/>
            <person name="Lim A."/>
            <person name="Dimalanta E.T."/>
            <person name="Potamousis K."/>
            <person name="Apodaca J."/>
            <person name="Anantharaman T.S."/>
            <person name="Lin J."/>
            <person name="Yen G."/>
            <person name="Schwartz D.C."/>
            <person name="Welch R.A."/>
            <person name="Blattner F.R."/>
        </authorList>
    </citation>
    <scope>NUCLEOTIDE SEQUENCE [LARGE SCALE GENOMIC DNA]</scope>
    <source>
        <strain>O157:H7 / EDL933 / ATCC 700927 / EHEC</strain>
    </source>
</reference>
<reference key="2">
    <citation type="journal article" date="2001" name="DNA Res.">
        <title>Complete genome sequence of enterohemorrhagic Escherichia coli O157:H7 and genomic comparison with a laboratory strain K-12.</title>
        <authorList>
            <person name="Hayashi T."/>
            <person name="Makino K."/>
            <person name="Ohnishi M."/>
            <person name="Kurokawa K."/>
            <person name="Ishii K."/>
            <person name="Yokoyama K."/>
            <person name="Han C.-G."/>
            <person name="Ohtsubo E."/>
            <person name="Nakayama K."/>
            <person name="Murata T."/>
            <person name="Tanaka M."/>
            <person name="Tobe T."/>
            <person name="Iida T."/>
            <person name="Takami H."/>
            <person name="Honda T."/>
            <person name="Sasakawa C."/>
            <person name="Ogasawara N."/>
            <person name="Yasunaga T."/>
            <person name="Kuhara S."/>
            <person name="Shiba T."/>
            <person name="Hattori M."/>
            <person name="Shinagawa H."/>
        </authorList>
    </citation>
    <scope>NUCLEOTIDE SEQUENCE [LARGE SCALE GENOMIC DNA]</scope>
    <source>
        <strain>O157:H7 / Sakai / RIMD 0509952 / EHEC</strain>
    </source>
</reference>
<proteinExistence type="inferred from homology"/>
<comment type="function">
    <text evidence="1">Catalyzes the reversible cleavage of L-rhamnulose-1-phosphate to dihydroxyacetone phosphate (DHAP) and L-lactaldehyde.</text>
</comment>
<comment type="catalytic activity">
    <reaction evidence="1">
        <text>L-rhamnulose 1-phosphate = (S)-lactaldehyde + dihydroxyacetone phosphate</text>
        <dbReference type="Rhea" id="RHEA:19689"/>
        <dbReference type="ChEBI" id="CHEBI:18041"/>
        <dbReference type="ChEBI" id="CHEBI:57642"/>
        <dbReference type="ChEBI" id="CHEBI:58313"/>
        <dbReference type="EC" id="4.1.2.19"/>
    </reaction>
</comment>
<comment type="cofactor">
    <cofactor evidence="1">
        <name>Zn(2+)</name>
        <dbReference type="ChEBI" id="CHEBI:29105"/>
    </cofactor>
    <text evidence="1">Binds 1 zinc ion per subunit.</text>
</comment>
<comment type="pathway">
    <text evidence="1">Carbohydrate degradation; L-rhamnose degradation; glycerone phosphate from L-rhamnose: step 3/3.</text>
</comment>
<comment type="subunit">
    <text evidence="1">Homotetramer.</text>
</comment>
<comment type="subcellular location">
    <subcellularLocation>
        <location evidence="1">Cytoplasm</location>
    </subcellularLocation>
</comment>
<comment type="similarity">
    <text evidence="1">Belongs to the aldolase class II family. RhaD subfamily.</text>
</comment>
<feature type="chain" id="PRO_0000209659" description="Rhamnulose-1-phosphate aldolase">
    <location>
        <begin position="1"/>
        <end position="274"/>
    </location>
</feature>
<feature type="active site" evidence="1">
    <location>
        <position position="117"/>
    </location>
</feature>
<feature type="binding site" evidence="1">
    <location>
        <position position="141"/>
    </location>
    <ligand>
        <name>Zn(2+)</name>
        <dbReference type="ChEBI" id="CHEBI:29105"/>
    </ligand>
</feature>
<feature type="binding site" evidence="1">
    <location>
        <position position="143"/>
    </location>
    <ligand>
        <name>Zn(2+)</name>
        <dbReference type="ChEBI" id="CHEBI:29105"/>
    </ligand>
</feature>
<feature type="binding site" evidence="1">
    <location>
        <position position="212"/>
    </location>
    <ligand>
        <name>Zn(2+)</name>
        <dbReference type="ChEBI" id="CHEBI:29105"/>
    </ligand>
</feature>
<accession>Q8X8A1</accession>
<protein>
    <recommendedName>
        <fullName evidence="1">Rhamnulose-1-phosphate aldolase</fullName>
        <ecNumber evidence="1">4.1.2.19</ecNumber>
    </recommendedName>
</protein>
<sequence>MQNITQSWFVQGMIKATTDAWLKGWDERNGGNLTLRLDDADIALYHDNFHPQPRYIPLSQPMPLLANTPFIVTGSGKFFRNVQLDPAANLGVVKVDSDGAGYHILWGLTNEAVPTSELPAHFLSHCERIKATNGKDRVIMHCHATNLIALTYVLENDTAVFTRQLWEGSTECLVVFPDGVGILPWMVPGTDEIGQATAQEMQKHSLVLWPFHGVFGSGPTLDETFGLIDTAEKSAEVLVKVYSMGGMKQTISREELIALGQRFGVTPLASALAL</sequence>
<organism>
    <name type="scientific">Escherichia coli O157:H7</name>
    <dbReference type="NCBI Taxonomy" id="83334"/>
    <lineage>
        <taxon>Bacteria</taxon>
        <taxon>Pseudomonadati</taxon>
        <taxon>Pseudomonadota</taxon>
        <taxon>Gammaproteobacteria</taxon>
        <taxon>Enterobacterales</taxon>
        <taxon>Enterobacteriaceae</taxon>
        <taxon>Escherichia</taxon>
    </lineage>
</organism>
<dbReference type="EC" id="4.1.2.19" evidence="1"/>
<dbReference type="EMBL" id="AE005174">
    <property type="protein sequence ID" value="AAG59096.1"/>
    <property type="molecule type" value="Genomic_DNA"/>
</dbReference>
<dbReference type="EMBL" id="BA000007">
    <property type="protein sequence ID" value="BAB38252.1"/>
    <property type="molecule type" value="Genomic_DNA"/>
</dbReference>
<dbReference type="PIR" id="D86079">
    <property type="entry name" value="D86079"/>
</dbReference>
<dbReference type="PIR" id="E91232">
    <property type="entry name" value="E91232"/>
</dbReference>
<dbReference type="RefSeq" id="NP_312856.1">
    <property type="nucleotide sequence ID" value="NC_002695.1"/>
</dbReference>
<dbReference type="RefSeq" id="WP_001179721.1">
    <property type="nucleotide sequence ID" value="NZ_VOAI01000016.1"/>
</dbReference>
<dbReference type="SMR" id="Q8X8A1"/>
<dbReference type="STRING" id="155864.Z5446"/>
<dbReference type="GeneID" id="915067"/>
<dbReference type="KEGG" id="ece:Z5446"/>
<dbReference type="KEGG" id="ecs:ECs_4829"/>
<dbReference type="PATRIC" id="fig|386585.9.peg.5046"/>
<dbReference type="eggNOG" id="COG0235">
    <property type="taxonomic scope" value="Bacteria"/>
</dbReference>
<dbReference type="HOGENOM" id="CLU_076831_0_0_6"/>
<dbReference type="OMA" id="SHFMSHI"/>
<dbReference type="UniPathway" id="UPA00541">
    <property type="reaction ID" value="UER00603"/>
</dbReference>
<dbReference type="Proteomes" id="UP000000558">
    <property type="component" value="Chromosome"/>
</dbReference>
<dbReference type="Proteomes" id="UP000002519">
    <property type="component" value="Chromosome"/>
</dbReference>
<dbReference type="GO" id="GO:0005829">
    <property type="term" value="C:cytosol"/>
    <property type="evidence" value="ECO:0007669"/>
    <property type="project" value="TreeGrafter"/>
</dbReference>
<dbReference type="GO" id="GO:0046872">
    <property type="term" value="F:metal ion binding"/>
    <property type="evidence" value="ECO:0007669"/>
    <property type="project" value="UniProtKB-KW"/>
</dbReference>
<dbReference type="GO" id="GO:0008994">
    <property type="term" value="F:rhamnulose-1-phosphate aldolase activity"/>
    <property type="evidence" value="ECO:0007669"/>
    <property type="project" value="UniProtKB-UniRule"/>
</dbReference>
<dbReference type="GO" id="GO:0019323">
    <property type="term" value="P:pentose catabolic process"/>
    <property type="evidence" value="ECO:0007669"/>
    <property type="project" value="TreeGrafter"/>
</dbReference>
<dbReference type="GO" id="GO:0019301">
    <property type="term" value="P:rhamnose catabolic process"/>
    <property type="evidence" value="ECO:0007669"/>
    <property type="project" value="UniProtKB-UniRule"/>
</dbReference>
<dbReference type="CDD" id="cd00398">
    <property type="entry name" value="Aldolase_II"/>
    <property type="match status" value="1"/>
</dbReference>
<dbReference type="FunFam" id="3.40.225.10:FF:000006">
    <property type="entry name" value="Rhamnulose-1-phosphate aldolase"/>
    <property type="match status" value="1"/>
</dbReference>
<dbReference type="Gene3D" id="3.40.225.10">
    <property type="entry name" value="Class II aldolase/adducin N-terminal domain"/>
    <property type="match status" value="1"/>
</dbReference>
<dbReference type="HAMAP" id="MF_00770">
    <property type="entry name" value="RhaD"/>
    <property type="match status" value="1"/>
</dbReference>
<dbReference type="InterPro" id="IPR050197">
    <property type="entry name" value="Aldolase_class_II_sugar_metab"/>
</dbReference>
<dbReference type="InterPro" id="IPR001303">
    <property type="entry name" value="Aldolase_II/adducin_N"/>
</dbReference>
<dbReference type="InterPro" id="IPR036409">
    <property type="entry name" value="Aldolase_II/adducin_N_sf"/>
</dbReference>
<dbReference type="InterPro" id="IPR013447">
    <property type="entry name" value="Rhamnulose-1-P_Aldolase"/>
</dbReference>
<dbReference type="NCBIfam" id="NF002963">
    <property type="entry name" value="PRK03634.1"/>
    <property type="match status" value="1"/>
</dbReference>
<dbReference type="NCBIfam" id="TIGR02624">
    <property type="entry name" value="rhamnu_1P_ald"/>
    <property type="match status" value="1"/>
</dbReference>
<dbReference type="PANTHER" id="PTHR22789">
    <property type="entry name" value="FUCULOSE PHOSPHATE ALDOLASE"/>
    <property type="match status" value="1"/>
</dbReference>
<dbReference type="PANTHER" id="PTHR22789:SF16">
    <property type="entry name" value="RHAMNULOSE-1-PHOSPHATE ALDOLASE"/>
    <property type="match status" value="1"/>
</dbReference>
<dbReference type="Pfam" id="PF00596">
    <property type="entry name" value="Aldolase_II"/>
    <property type="match status" value="1"/>
</dbReference>
<dbReference type="SMART" id="SM01007">
    <property type="entry name" value="Aldolase_II"/>
    <property type="match status" value="1"/>
</dbReference>
<dbReference type="SUPFAM" id="SSF53639">
    <property type="entry name" value="AraD/HMP-PK domain-like"/>
    <property type="match status" value="1"/>
</dbReference>
<gene>
    <name evidence="1" type="primary">rhaD</name>
    <name type="ordered locus">Z5446</name>
    <name type="ordered locus">ECs4829</name>
</gene>
<name>RHAD_ECO57</name>